<name>RS14Z_HELPS</name>
<sequence>MAKKSMIAKAQRKPKFQVRAYTRCRICGRPHSVYRDFGLCRVCLRKMGSEGLIPGLRKASW</sequence>
<evidence type="ECO:0000255" key="1">
    <source>
        <dbReference type="HAMAP-Rule" id="MF_01364"/>
    </source>
</evidence>
<evidence type="ECO:0000305" key="2"/>
<organism>
    <name type="scientific">Helicobacter pylori (strain Shi470)</name>
    <dbReference type="NCBI Taxonomy" id="512562"/>
    <lineage>
        <taxon>Bacteria</taxon>
        <taxon>Pseudomonadati</taxon>
        <taxon>Campylobacterota</taxon>
        <taxon>Epsilonproteobacteria</taxon>
        <taxon>Campylobacterales</taxon>
        <taxon>Helicobacteraceae</taxon>
        <taxon>Helicobacter</taxon>
    </lineage>
</organism>
<accession>B2UV69</accession>
<comment type="function">
    <text evidence="1">Binds 16S rRNA, required for the assembly of 30S particles and may also be responsible for determining the conformation of the 16S rRNA at the A site.</text>
</comment>
<comment type="cofactor">
    <cofactor evidence="1">
        <name>Zn(2+)</name>
        <dbReference type="ChEBI" id="CHEBI:29105"/>
    </cofactor>
    <text evidence="1">Binds 1 zinc ion per subunit.</text>
</comment>
<comment type="subunit">
    <text evidence="1">Part of the 30S ribosomal subunit. Contacts proteins S3 and S10.</text>
</comment>
<comment type="similarity">
    <text evidence="1">Belongs to the universal ribosomal protein uS14 family. Zinc-binding uS14 subfamily.</text>
</comment>
<feature type="chain" id="PRO_1000143908" description="Small ribosomal subunit protein uS14">
    <location>
        <begin position="1"/>
        <end position="61"/>
    </location>
</feature>
<feature type="binding site" evidence="1">
    <location>
        <position position="24"/>
    </location>
    <ligand>
        <name>Zn(2+)</name>
        <dbReference type="ChEBI" id="CHEBI:29105"/>
    </ligand>
</feature>
<feature type="binding site" evidence="1">
    <location>
        <position position="27"/>
    </location>
    <ligand>
        <name>Zn(2+)</name>
        <dbReference type="ChEBI" id="CHEBI:29105"/>
    </ligand>
</feature>
<feature type="binding site" evidence="1">
    <location>
        <position position="40"/>
    </location>
    <ligand>
        <name>Zn(2+)</name>
        <dbReference type="ChEBI" id="CHEBI:29105"/>
    </ligand>
</feature>
<feature type="binding site" evidence="1">
    <location>
        <position position="43"/>
    </location>
    <ligand>
        <name>Zn(2+)</name>
        <dbReference type="ChEBI" id="CHEBI:29105"/>
    </ligand>
</feature>
<proteinExistence type="inferred from homology"/>
<keyword id="KW-0479">Metal-binding</keyword>
<keyword id="KW-0687">Ribonucleoprotein</keyword>
<keyword id="KW-0689">Ribosomal protein</keyword>
<keyword id="KW-0694">RNA-binding</keyword>
<keyword id="KW-0699">rRNA-binding</keyword>
<keyword id="KW-0862">Zinc</keyword>
<dbReference type="EMBL" id="CP001072">
    <property type="protein sequence ID" value="ACD48751.1"/>
    <property type="molecule type" value="Genomic_DNA"/>
</dbReference>
<dbReference type="RefSeq" id="WP_001085694.1">
    <property type="nucleotide sequence ID" value="NC_010698.2"/>
</dbReference>
<dbReference type="SMR" id="B2UV69"/>
<dbReference type="KEGG" id="hps:HPSH_06755"/>
<dbReference type="HOGENOM" id="CLU_139869_3_0_7"/>
<dbReference type="GO" id="GO:0005737">
    <property type="term" value="C:cytoplasm"/>
    <property type="evidence" value="ECO:0007669"/>
    <property type="project" value="UniProtKB-ARBA"/>
</dbReference>
<dbReference type="GO" id="GO:0015935">
    <property type="term" value="C:small ribosomal subunit"/>
    <property type="evidence" value="ECO:0007669"/>
    <property type="project" value="TreeGrafter"/>
</dbReference>
<dbReference type="GO" id="GO:0019843">
    <property type="term" value="F:rRNA binding"/>
    <property type="evidence" value="ECO:0007669"/>
    <property type="project" value="UniProtKB-UniRule"/>
</dbReference>
<dbReference type="GO" id="GO:0003735">
    <property type="term" value="F:structural constituent of ribosome"/>
    <property type="evidence" value="ECO:0007669"/>
    <property type="project" value="InterPro"/>
</dbReference>
<dbReference type="GO" id="GO:0008270">
    <property type="term" value="F:zinc ion binding"/>
    <property type="evidence" value="ECO:0007669"/>
    <property type="project" value="UniProtKB-UniRule"/>
</dbReference>
<dbReference type="GO" id="GO:0006412">
    <property type="term" value="P:translation"/>
    <property type="evidence" value="ECO:0007669"/>
    <property type="project" value="UniProtKB-UniRule"/>
</dbReference>
<dbReference type="FunFam" id="4.10.830.10:FF:000001">
    <property type="entry name" value="30S ribosomal protein S14 type Z"/>
    <property type="match status" value="1"/>
</dbReference>
<dbReference type="Gene3D" id="4.10.830.10">
    <property type="entry name" value="30s Ribosomal Protein S14, Chain N"/>
    <property type="match status" value="1"/>
</dbReference>
<dbReference type="HAMAP" id="MF_01364_B">
    <property type="entry name" value="Ribosomal_uS14_2_B"/>
    <property type="match status" value="1"/>
</dbReference>
<dbReference type="InterPro" id="IPR001209">
    <property type="entry name" value="Ribosomal_uS14"/>
</dbReference>
<dbReference type="InterPro" id="IPR023053">
    <property type="entry name" value="Ribosomal_uS14_bact"/>
</dbReference>
<dbReference type="InterPro" id="IPR018271">
    <property type="entry name" value="Ribosomal_uS14_CS"/>
</dbReference>
<dbReference type="InterPro" id="IPR043140">
    <property type="entry name" value="Ribosomal_uS14_sf"/>
</dbReference>
<dbReference type="NCBIfam" id="NF005974">
    <property type="entry name" value="PRK08061.1"/>
    <property type="match status" value="1"/>
</dbReference>
<dbReference type="PANTHER" id="PTHR19836">
    <property type="entry name" value="30S RIBOSOMAL PROTEIN S14"/>
    <property type="match status" value="1"/>
</dbReference>
<dbReference type="PANTHER" id="PTHR19836:SF19">
    <property type="entry name" value="SMALL RIBOSOMAL SUBUNIT PROTEIN US14M"/>
    <property type="match status" value="1"/>
</dbReference>
<dbReference type="Pfam" id="PF00253">
    <property type="entry name" value="Ribosomal_S14"/>
    <property type="match status" value="1"/>
</dbReference>
<dbReference type="SUPFAM" id="SSF57716">
    <property type="entry name" value="Glucocorticoid receptor-like (DNA-binding domain)"/>
    <property type="match status" value="1"/>
</dbReference>
<dbReference type="PROSITE" id="PS00527">
    <property type="entry name" value="RIBOSOMAL_S14"/>
    <property type="match status" value="1"/>
</dbReference>
<reference key="1">
    <citation type="submission" date="2008-05" db="EMBL/GenBank/DDBJ databases">
        <title>Genome sequence of Helicobacter pylori from the remote Amazon: traces of Asian ancestry of the first Americans.</title>
        <authorList>
            <person name="Kersulyte D."/>
            <person name="Kalia A."/>
            <person name="Gilman R.H."/>
            <person name="Berg D.E."/>
        </authorList>
    </citation>
    <scope>NUCLEOTIDE SEQUENCE [LARGE SCALE GENOMIC DNA]</scope>
    <source>
        <strain>Shi470</strain>
    </source>
</reference>
<protein>
    <recommendedName>
        <fullName evidence="1">Small ribosomal subunit protein uS14</fullName>
    </recommendedName>
    <alternativeName>
        <fullName evidence="2">30S ribosomal protein S14 type Z</fullName>
    </alternativeName>
</protein>
<gene>
    <name evidence="1" type="primary">rpsZ</name>
    <name evidence="1" type="synonym">rpsN</name>
    <name type="ordered locus">HPSH_06755</name>
</gene>